<accession>P96797</accession>
<accession>Q46C47</accession>
<accession>Q9UWK2</accession>
<proteinExistence type="evidence at protein level"/>
<reference key="1">
    <citation type="journal article" date="1997" name="Eur. J. Biochem.">
        <title>Heterodisulfide reductase from methanol-grown cells of Methanosarcina barkeri is not a flavoenzyme.</title>
        <authorList>
            <person name="Kuenkel A."/>
            <person name="Vaupel M."/>
            <person name="Heim S."/>
            <person name="Thauer R.K."/>
            <person name="Hedderich R."/>
        </authorList>
    </citation>
    <scope>NUCLEOTIDE SEQUENCE [GENOMIC DNA]</scope>
    <scope>FUNCTION</scope>
    <scope>COFACTOR</scope>
    <scope>SUBUNIT</scope>
    <source>
        <strain>Fusaro / DSM 804</strain>
    </source>
</reference>
<reference key="2">
    <citation type="journal article" date="2006" name="J. Bacteriol.">
        <title>The Methanosarcina barkeri genome: comparative analysis with Methanosarcina acetivorans and Methanosarcina mazei reveals extensive rearrangement within methanosarcinal genomes.</title>
        <authorList>
            <person name="Maeder D.L."/>
            <person name="Anderson I."/>
            <person name="Brettin T.S."/>
            <person name="Bruce D.C."/>
            <person name="Gilna P."/>
            <person name="Han C.S."/>
            <person name="Lapidus A."/>
            <person name="Metcalf W.W."/>
            <person name="Saunders E."/>
            <person name="Tapia R."/>
            <person name="Sowers K.R."/>
        </authorList>
    </citation>
    <scope>NUCLEOTIDE SEQUENCE [LARGE SCALE GENOMIC DNA]</scope>
    <source>
        <strain>Fusaro / DSM 804</strain>
    </source>
</reference>
<reference key="3">
    <citation type="journal article" date="1994" name="Eur. J. Biochem.">
        <title>Purification of a two-subunit cytochrome-b-containing heterodisulfide reductase from methanol-grown Methanosarcina barkeri.</title>
        <authorList>
            <person name="Heiden S."/>
            <person name="Hedderich R."/>
            <person name="Setzke E."/>
            <person name="Thauer R.K."/>
        </authorList>
    </citation>
    <scope>PROTEIN SEQUENCE OF 2-20</scope>
    <scope>FUNCTION</scope>
    <scope>SUBUNIT</scope>
</reference>
<organism>
    <name type="scientific">Methanosarcina barkeri (strain Fusaro / DSM 804)</name>
    <dbReference type="NCBI Taxonomy" id="269797"/>
    <lineage>
        <taxon>Archaea</taxon>
        <taxon>Methanobacteriati</taxon>
        <taxon>Methanobacteriota</taxon>
        <taxon>Stenosarchaea group</taxon>
        <taxon>Methanomicrobia</taxon>
        <taxon>Methanosarcinales</taxon>
        <taxon>Methanosarcinaceae</taxon>
        <taxon>Methanosarcina</taxon>
    </lineage>
</organism>
<comment type="function">
    <text evidence="6 7">Part of a complex that catalyzes the reversible reduction of CoM-S-S-CoB to the thiol-coenzymes H-S-CoM (coenzyme M) and H-S-CoB (coenzyme B).</text>
</comment>
<comment type="catalytic activity">
    <reaction evidence="1">
        <text>methanophenazine + coenzyme B + coenzyme M = dihydromethanophenazine + coenzyme M-coenzyme B heterodisulfide</text>
        <dbReference type="Rhea" id="RHEA:18085"/>
        <dbReference type="ChEBI" id="CHEBI:29118"/>
        <dbReference type="ChEBI" id="CHEBI:50375"/>
        <dbReference type="ChEBI" id="CHEBI:58319"/>
        <dbReference type="ChEBI" id="CHEBI:58411"/>
        <dbReference type="ChEBI" id="CHEBI:58596"/>
        <dbReference type="EC" id="1.8.98.1"/>
    </reaction>
</comment>
<comment type="cofactor">
    <cofactor evidence="2 7">
        <name>[4Fe-4S] cluster</name>
        <dbReference type="ChEBI" id="CHEBI:49883"/>
    </cofactor>
    <text evidence="2 7">Binds 2 [4Fe-4S] clusters per subunit.</text>
</comment>
<comment type="pathway">
    <text evidence="5">Cofactor metabolism; coenzyme M-coenzyme B heterodisulfide reduction; coenzyme B and coenzyme M from coenzyme M-coenzyme B heterodisulfide: step 1/1.</text>
</comment>
<comment type="subunit">
    <text evidence="3 4">The dihydromethanophenazine:CoB--CoM heterodisulfide reductase is composed of two subunits; HdrD and HdrE.</text>
</comment>
<comment type="similarity">
    <text evidence="5">Belongs to the HdrD family.</text>
</comment>
<feature type="initiator methionine" description="Removed" evidence="3">
    <location>
        <position position="1"/>
    </location>
</feature>
<feature type="chain" id="PRO_0000150080" description="Dihydromethanophenazine:CoB--CoM heterodisulfide reductase subunit D">
    <location>
        <begin position="2"/>
        <end position="409"/>
    </location>
</feature>
<feature type="domain" description="4Fe-4S ferredoxin-type 1" evidence="2">
    <location>
        <begin position="14"/>
        <end position="44"/>
    </location>
</feature>
<feature type="domain" description="4Fe-4S ferredoxin-type 2" evidence="2">
    <location>
        <begin position="81"/>
        <end position="110"/>
    </location>
</feature>
<feature type="binding site" evidence="2">
    <location>
        <position position="24"/>
    </location>
    <ligand>
        <name>[4Fe-4S] cluster</name>
        <dbReference type="ChEBI" id="CHEBI:49883"/>
        <label>1</label>
    </ligand>
</feature>
<feature type="binding site" evidence="2">
    <location>
        <position position="27"/>
    </location>
    <ligand>
        <name>[4Fe-4S] cluster</name>
        <dbReference type="ChEBI" id="CHEBI:49883"/>
        <label>1</label>
    </ligand>
</feature>
<feature type="binding site" evidence="2">
    <location>
        <position position="30"/>
    </location>
    <ligand>
        <name>[4Fe-4S] cluster</name>
        <dbReference type="ChEBI" id="CHEBI:49883"/>
        <label>1</label>
    </ligand>
</feature>
<feature type="binding site" evidence="2">
    <location>
        <position position="34"/>
    </location>
    <ligand>
        <name>[4Fe-4S] cluster</name>
        <dbReference type="ChEBI" id="CHEBI:49883"/>
        <label>2</label>
    </ligand>
</feature>
<feature type="binding site" evidence="2">
    <location>
        <position position="90"/>
    </location>
    <ligand>
        <name>[4Fe-4S] cluster</name>
        <dbReference type="ChEBI" id="CHEBI:49883"/>
        <label>2</label>
    </ligand>
</feature>
<feature type="binding site" evidence="2">
    <location>
        <position position="93"/>
    </location>
    <ligand>
        <name>[4Fe-4S] cluster</name>
        <dbReference type="ChEBI" id="CHEBI:49883"/>
        <label>2</label>
    </ligand>
</feature>
<feature type="binding site" evidence="2">
    <location>
        <position position="96"/>
    </location>
    <ligand>
        <name>[4Fe-4S] cluster</name>
        <dbReference type="ChEBI" id="CHEBI:49883"/>
        <label>2</label>
    </ligand>
</feature>
<feature type="binding site" evidence="2">
    <location>
        <position position="100"/>
    </location>
    <ligand>
        <name>[4Fe-4S] cluster</name>
        <dbReference type="ChEBI" id="CHEBI:49883"/>
        <label>1</label>
    </ligand>
</feature>
<feature type="sequence conflict" description="In Ref. 1; CAA70997." evidence="5" ref="1">
    <original>KP</original>
    <variation>HQ</variation>
    <location>
        <begin position="43"/>
        <end position="44"/>
    </location>
</feature>
<dbReference type="EC" id="1.8.98.1" evidence="1"/>
<dbReference type="EMBL" id="Y09870">
    <property type="protein sequence ID" value="CAA70997.1"/>
    <property type="molecule type" value="Genomic_DNA"/>
</dbReference>
<dbReference type="EMBL" id="CP000099">
    <property type="protein sequence ID" value="AAZ70545.1"/>
    <property type="molecule type" value="Genomic_DNA"/>
</dbReference>
<dbReference type="PIR" id="S43468">
    <property type="entry name" value="S43468"/>
</dbReference>
<dbReference type="SMR" id="P96797"/>
<dbReference type="STRING" id="269797.Mbar_A1599"/>
<dbReference type="TCDB" id="3.D.7.1.1">
    <property type="family name" value="the h2:heterodisulfide oxidoreductase (hho) family"/>
</dbReference>
<dbReference type="PaxDb" id="269797-Mbar_A1599"/>
<dbReference type="KEGG" id="mba:Mbar_A1599"/>
<dbReference type="eggNOG" id="arCOG00333">
    <property type="taxonomic scope" value="Archaea"/>
</dbReference>
<dbReference type="HOGENOM" id="CLU_023081_2_0_2"/>
<dbReference type="OrthoDB" id="42878at2157"/>
<dbReference type="BioCyc" id="MetaCyc:HDRDMBARK-MONOMER"/>
<dbReference type="UniPathway" id="UPA00647">
    <property type="reaction ID" value="UER00700"/>
</dbReference>
<dbReference type="GO" id="GO:0051539">
    <property type="term" value="F:4 iron, 4 sulfur cluster binding"/>
    <property type="evidence" value="ECO:0007669"/>
    <property type="project" value="UniProtKB-KW"/>
</dbReference>
<dbReference type="GO" id="GO:0051912">
    <property type="term" value="F:CoB--CoM heterodisulfide reductase activity"/>
    <property type="evidence" value="ECO:0000314"/>
    <property type="project" value="UniProtKB"/>
</dbReference>
<dbReference type="GO" id="GO:0046872">
    <property type="term" value="F:metal ion binding"/>
    <property type="evidence" value="ECO:0007669"/>
    <property type="project" value="UniProtKB-KW"/>
</dbReference>
<dbReference type="GO" id="GO:0015948">
    <property type="term" value="P:methanogenesis"/>
    <property type="evidence" value="ECO:0000314"/>
    <property type="project" value="UniProtKB"/>
</dbReference>
<dbReference type="Gene3D" id="1.10.1060.10">
    <property type="entry name" value="Alpha-helical ferredoxin"/>
    <property type="match status" value="1"/>
</dbReference>
<dbReference type="InterPro" id="IPR017896">
    <property type="entry name" value="4Fe4S_Fe-S-bd"/>
</dbReference>
<dbReference type="InterPro" id="IPR017900">
    <property type="entry name" value="4Fe4S_Fe_S_CS"/>
</dbReference>
<dbReference type="InterPro" id="IPR004017">
    <property type="entry name" value="Cys_rich_dom"/>
</dbReference>
<dbReference type="InterPro" id="IPR051278">
    <property type="entry name" value="HdrB/HdrD_reductase"/>
</dbReference>
<dbReference type="InterPro" id="IPR009051">
    <property type="entry name" value="Helical_ferredxn"/>
</dbReference>
<dbReference type="PANTHER" id="PTHR42947">
    <property type="entry name" value="COB--COM HETERODISULFIDE REDUCTASE SUBUNIT B 1"/>
    <property type="match status" value="1"/>
</dbReference>
<dbReference type="PANTHER" id="PTHR42947:SF1">
    <property type="entry name" value="COB--COM HETERODISULFIDE REDUCTASE SUBUNIT B 1"/>
    <property type="match status" value="1"/>
</dbReference>
<dbReference type="Pfam" id="PF02754">
    <property type="entry name" value="CCG"/>
    <property type="match status" value="2"/>
</dbReference>
<dbReference type="Pfam" id="PF13183">
    <property type="entry name" value="Fer4_8"/>
    <property type="match status" value="1"/>
</dbReference>
<dbReference type="SUPFAM" id="SSF46548">
    <property type="entry name" value="alpha-helical ferredoxin"/>
    <property type="match status" value="1"/>
</dbReference>
<dbReference type="PROSITE" id="PS00198">
    <property type="entry name" value="4FE4S_FER_1"/>
    <property type="match status" value="2"/>
</dbReference>
<dbReference type="PROSITE" id="PS51379">
    <property type="entry name" value="4FE4S_FER_2"/>
    <property type="match status" value="2"/>
</dbReference>
<gene>
    <name type="primary">hdrD</name>
    <name type="ordered locus">Mbar_A1599</name>
</gene>
<sequence>MAKRTPSIDTKNLTAVQLMELDACVRCGECVKWCPTYAASGGKPGLAPRDKILRWRQYMNKSYGLKAKLFGPQEVSPSELEEFKDDVHGCTTCGVCATVCEAGINTVEIWEAIRTNLVKKGIGPYGKQSAFPKLVGQYHNPYMKDQKDRLAWVPPDVKIEDKADIVYFTGCTAGYNQLALAFATSRVLNKLGIKFAMLGEEEWCCGSALIRTGQVHVDDVARELARHNVEALQKKGAKKVLFACAGCFRAAKIDWPRLLGKELPFEVIHITQFLADLIQADKIKWEKPINKTITYHDPCHLGRHVGVFNAPRYVLSHIPGVKFVEMDRSKEFQRCCGAGGGVKAGMPDLAVAMGESRVKDALETNADILSSACPFCKRNLSDGRDALKSDIVVEDIIELVAEALGLSTS</sequence>
<protein>
    <recommendedName>
        <fullName evidence="5">Dihydromethanophenazine:CoB--CoM heterodisulfide reductase subunit D</fullName>
        <ecNumber evidence="1">1.8.98.1</ecNumber>
    </recommendedName>
    <alternativeName>
        <fullName evidence="5">CoB--CoM heterodisulfide reductase iron-sulfur subunit D</fullName>
    </alternativeName>
    <alternativeName>
        <fullName evidence="5">Coenzyme B:coenzyme M:methanophenazine oxidoreductase subunit D</fullName>
    </alternativeName>
</protein>
<evidence type="ECO:0000250" key="1">
    <source>
        <dbReference type="UniProtKB" id="A0A0E3NEE1"/>
    </source>
</evidence>
<evidence type="ECO:0000255" key="2">
    <source>
        <dbReference type="PROSITE-ProRule" id="PRU00711"/>
    </source>
</evidence>
<evidence type="ECO:0000269" key="3">
    <source>
    </source>
</evidence>
<evidence type="ECO:0000269" key="4">
    <source>
    </source>
</evidence>
<evidence type="ECO:0000305" key="5"/>
<evidence type="ECO:0000305" key="6">
    <source>
    </source>
</evidence>
<evidence type="ECO:0000305" key="7">
    <source>
    </source>
</evidence>
<keyword id="KW-0004">4Fe-4S</keyword>
<keyword id="KW-0903">Direct protein sequencing</keyword>
<keyword id="KW-0408">Iron</keyword>
<keyword id="KW-0411">Iron-sulfur</keyword>
<keyword id="KW-0479">Metal-binding</keyword>
<keyword id="KW-0484">Methanogenesis</keyword>
<keyword id="KW-0560">Oxidoreductase</keyword>
<keyword id="KW-0677">Repeat</keyword>
<name>HDRD_METBF</name>